<organism>
    <name type="scientific">Sinorhizobium fredii (strain NBRC 101917 / NGR234)</name>
    <dbReference type="NCBI Taxonomy" id="394"/>
    <lineage>
        <taxon>Bacteria</taxon>
        <taxon>Pseudomonadati</taxon>
        <taxon>Pseudomonadota</taxon>
        <taxon>Alphaproteobacteria</taxon>
        <taxon>Hyphomicrobiales</taxon>
        <taxon>Rhizobiaceae</taxon>
        <taxon>Sinorhizobium/Ensifer group</taxon>
        <taxon>Sinorhizobium</taxon>
    </lineage>
</organism>
<gene>
    <name evidence="1" type="primary">gatC</name>
    <name type="ordered locus">NGR_c10950</name>
</gene>
<feature type="chain" id="PRO_1000122579" description="Aspartyl/glutamyl-tRNA(Asn/Gln) amidotransferase subunit C">
    <location>
        <begin position="1"/>
        <end position="95"/>
    </location>
</feature>
<accession>C3MAA2</accession>
<evidence type="ECO:0000255" key="1">
    <source>
        <dbReference type="HAMAP-Rule" id="MF_00122"/>
    </source>
</evidence>
<sequence length="95" mass="10365">MSVDLATVKRVARLARIAVSDEEAERMTGELNGILGFVEQLSEVNVDGVEPMTSVMPMEMKKRDDIVADGDKAADIVANAPNSDRDFFLVPKVVE</sequence>
<protein>
    <recommendedName>
        <fullName evidence="1">Aspartyl/glutamyl-tRNA(Asn/Gln) amidotransferase subunit C</fullName>
        <shortName evidence="1">Asp/Glu-ADT subunit C</shortName>
        <ecNumber evidence="1">6.3.5.-</ecNumber>
    </recommendedName>
</protein>
<reference key="1">
    <citation type="journal article" date="2009" name="Appl. Environ. Microbiol.">
        <title>Rhizobium sp. strain NGR234 possesses a remarkable number of secretion systems.</title>
        <authorList>
            <person name="Schmeisser C."/>
            <person name="Liesegang H."/>
            <person name="Krysciak D."/>
            <person name="Bakkou N."/>
            <person name="Le Quere A."/>
            <person name="Wollherr A."/>
            <person name="Heinemeyer I."/>
            <person name="Morgenstern B."/>
            <person name="Pommerening-Roeser A."/>
            <person name="Flores M."/>
            <person name="Palacios R."/>
            <person name="Brenner S."/>
            <person name="Gottschalk G."/>
            <person name="Schmitz R.A."/>
            <person name="Broughton W.J."/>
            <person name="Perret X."/>
            <person name="Strittmatter A.W."/>
            <person name="Streit W.R."/>
        </authorList>
    </citation>
    <scope>NUCLEOTIDE SEQUENCE [LARGE SCALE GENOMIC DNA]</scope>
    <source>
        <strain>NBRC 101917 / NGR234</strain>
    </source>
</reference>
<name>GATC_SINFN</name>
<proteinExistence type="inferred from homology"/>
<comment type="function">
    <text evidence="1">Allows the formation of correctly charged Asn-tRNA(Asn) or Gln-tRNA(Gln) through the transamidation of misacylated Asp-tRNA(Asn) or Glu-tRNA(Gln) in organisms which lack either or both of asparaginyl-tRNA or glutaminyl-tRNA synthetases. The reaction takes place in the presence of glutamine and ATP through an activated phospho-Asp-tRNA(Asn) or phospho-Glu-tRNA(Gln).</text>
</comment>
<comment type="catalytic activity">
    <reaction evidence="1">
        <text>L-glutamyl-tRNA(Gln) + L-glutamine + ATP + H2O = L-glutaminyl-tRNA(Gln) + L-glutamate + ADP + phosphate + H(+)</text>
        <dbReference type="Rhea" id="RHEA:17521"/>
        <dbReference type="Rhea" id="RHEA-COMP:9681"/>
        <dbReference type="Rhea" id="RHEA-COMP:9684"/>
        <dbReference type="ChEBI" id="CHEBI:15377"/>
        <dbReference type="ChEBI" id="CHEBI:15378"/>
        <dbReference type="ChEBI" id="CHEBI:29985"/>
        <dbReference type="ChEBI" id="CHEBI:30616"/>
        <dbReference type="ChEBI" id="CHEBI:43474"/>
        <dbReference type="ChEBI" id="CHEBI:58359"/>
        <dbReference type="ChEBI" id="CHEBI:78520"/>
        <dbReference type="ChEBI" id="CHEBI:78521"/>
        <dbReference type="ChEBI" id="CHEBI:456216"/>
    </reaction>
</comment>
<comment type="catalytic activity">
    <reaction evidence="1">
        <text>L-aspartyl-tRNA(Asn) + L-glutamine + ATP + H2O = L-asparaginyl-tRNA(Asn) + L-glutamate + ADP + phosphate + 2 H(+)</text>
        <dbReference type="Rhea" id="RHEA:14513"/>
        <dbReference type="Rhea" id="RHEA-COMP:9674"/>
        <dbReference type="Rhea" id="RHEA-COMP:9677"/>
        <dbReference type="ChEBI" id="CHEBI:15377"/>
        <dbReference type="ChEBI" id="CHEBI:15378"/>
        <dbReference type="ChEBI" id="CHEBI:29985"/>
        <dbReference type="ChEBI" id="CHEBI:30616"/>
        <dbReference type="ChEBI" id="CHEBI:43474"/>
        <dbReference type="ChEBI" id="CHEBI:58359"/>
        <dbReference type="ChEBI" id="CHEBI:78515"/>
        <dbReference type="ChEBI" id="CHEBI:78516"/>
        <dbReference type="ChEBI" id="CHEBI:456216"/>
    </reaction>
</comment>
<comment type="subunit">
    <text evidence="1">Heterotrimer of A, B and C subunits.</text>
</comment>
<comment type="similarity">
    <text evidence="1">Belongs to the GatC family.</text>
</comment>
<keyword id="KW-0067">ATP-binding</keyword>
<keyword id="KW-0436">Ligase</keyword>
<keyword id="KW-0547">Nucleotide-binding</keyword>
<keyword id="KW-0648">Protein biosynthesis</keyword>
<keyword id="KW-1185">Reference proteome</keyword>
<dbReference type="EC" id="6.3.5.-" evidence="1"/>
<dbReference type="EMBL" id="CP001389">
    <property type="protein sequence ID" value="ACP24881.1"/>
    <property type="molecule type" value="Genomic_DNA"/>
</dbReference>
<dbReference type="RefSeq" id="WP_012707664.1">
    <property type="nucleotide sequence ID" value="NC_012587.1"/>
</dbReference>
<dbReference type="RefSeq" id="YP_002825634.1">
    <property type="nucleotide sequence ID" value="NC_012587.1"/>
</dbReference>
<dbReference type="SMR" id="C3MAA2"/>
<dbReference type="STRING" id="394.NGR_c10950"/>
<dbReference type="KEGG" id="rhi:NGR_c10950"/>
<dbReference type="PATRIC" id="fig|394.7.peg.3922"/>
<dbReference type="eggNOG" id="COG0721">
    <property type="taxonomic scope" value="Bacteria"/>
</dbReference>
<dbReference type="HOGENOM" id="CLU_105899_2_0_5"/>
<dbReference type="OrthoDB" id="9794326at2"/>
<dbReference type="Proteomes" id="UP000001054">
    <property type="component" value="Chromosome"/>
</dbReference>
<dbReference type="GO" id="GO:0050566">
    <property type="term" value="F:asparaginyl-tRNA synthase (glutamine-hydrolyzing) activity"/>
    <property type="evidence" value="ECO:0007669"/>
    <property type="project" value="RHEA"/>
</dbReference>
<dbReference type="GO" id="GO:0005524">
    <property type="term" value="F:ATP binding"/>
    <property type="evidence" value="ECO:0007669"/>
    <property type="project" value="UniProtKB-KW"/>
</dbReference>
<dbReference type="GO" id="GO:0050567">
    <property type="term" value="F:glutaminyl-tRNA synthase (glutamine-hydrolyzing) activity"/>
    <property type="evidence" value="ECO:0007669"/>
    <property type="project" value="UniProtKB-UniRule"/>
</dbReference>
<dbReference type="GO" id="GO:0070681">
    <property type="term" value="P:glutaminyl-tRNAGln biosynthesis via transamidation"/>
    <property type="evidence" value="ECO:0007669"/>
    <property type="project" value="TreeGrafter"/>
</dbReference>
<dbReference type="GO" id="GO:0006450">
    <property type="term" value="P:regulation of translational fidelity"/>
    <property type="evidence" value="ECO:0007669"/>
    <property type="project" value="InterPro"/>
</dbReference>
<dbReference type="GO" id="GO:0006412">
    <property type="term" value="P:translation"/>
    <property type="evidence" value="ECO:0007669"/>
    <property type="project" value="UniProtKB-UniRule"/>
</dbReference>
<dbReference type="Gene3D" id="1.10.20.60">
    <property type="entry name" value="Glu-tRNAGln amidotransferase C subunit, N-terminal domain"/>
    <property type="match status" value="1"/>
</dbReference>
<dbReference type="HAMAP" id="MF_00122">
    <property type="entry name" value="GatC"/>
    <property type="match status" value="1"/>
</dbReference>
<dbReference type="InterPro" id="IPR036113">
    <property type="entry name" value="Asp/Glu-ADT_sf_sub_c"/>
</dbReference>
<dbReference type="InterPro" id="IPR003837">
    <property type="entry name" value="GatC"/>
</dbReference>
<dbReference type="NCBIfam" id="TIGR00135">
    <property type="entry name" value="gatC"/>
    <property type="match status" value="1"/>
</dbReference>
<dbReference type="PANTHER" id="PTHR15004">
    <property type="entry name" value="GLUTAMYL-TRNA(GLN) AMIDOTRANSFERASE SUBUNIT C, MITOCHONDRIAL"/>
    <property type="match status" value="1"/>
</dbReference>
<dbReference type="PANTHER" id="PTHR15004:SF0">
    <property type="entry name" value="GLUTAMYL-TRNA(GLN) AMIDOTRANSFERASE SUBUNIT C, MITOCHONDRIAL"/>
    <property type="match status" value="1"/>
</dbReference>
<dbReference type="Pfam" id="PF02686">
    <property type="entry name" value="GatC"/>
    <property type="match status" value="1"/>
</dbReference>
<dbReference type="SUPFAM" id="SSF141000">
    <property type="entry name" value="Glu-tRNAGln amidotransferase C subunit"/>
    <property type="match status" value="1"/>
</dbReference>